<keyword id="KW-0002">3D-structure</keyword>
<keyword id="KW-1185">Reference proteome</keyword>
<reference key="1">
    <citation type="journal article" date="1996" name="DNA Res.">
        <title>A 718-kb DNA sequence of the Escherichia coli K-12 genome corresponding to the 12.7-28.0 min region on the linkage map.</title>
        <authorList>
            <person name="Oshima T."/>
            <person name="Aiba H."/>
            <person name="Baba T."/>
            <person name="Fujita K."/>
            <person name="Hayashi K."/>
            <person name="Honjo A."/>
            <person name="Ikemoto K."/>
            <person name="Inada T."/>
            <person name="Itoh T."/>
            <person name="Kajihara M."/>
            <person name="Kanai K."/>
            <person name="Kashimoto K."/>
            <person name="Kimura S."/>
            <person name="Kitagawa M."/>
            <person name="Makino K."/>
            <person name="Masuda S."/>
            <person name="Miki T."/>
            <person name="Mizobuchi K."/>
            <person name="Mori H."/>
            <person name="Motomura K."/>
            <person name="Nakamura Y."/>
            <person name="Nashimoto H."/>
            <person name="Nishio Y."/>
            <person name="Saito N."/>
            <person name="Sampei G."/>
            <person name="Seki Y."/>
            <person name="Tagami H."/>
            <person name="Takemoto K."/>
            <person name="Wada C."/>
            <person name="Yamamoto Y."/>
            <person name="Yano M."/>
            <person name="Horiuchi T."/>
        </authorList>
    </citation>
    <scope>NUCLEOTIDE SEQUENCE [LARGE SCALE GENOMIC DNA]</scope>
    <source>
        <strain>K12 / W3110 / ATCC 27325 / DSM 5911</strain>
    </source>
</reference>
<reference key="2">
    <citation type="journal article" date="1997" name="Science">
        <title>The complete genome sequence of Escherichia coli K-12.</title>
        <authorList>
            <person name="Blattner F.R."/>
            <person name="Plunkett G. III"/>
            <person name="Bloch C.A."/>
            <person name="Perna N.T."/>
            <person name="Burland V."/>
            <person name="Riley M."/>
            <person name="Collado-Vides J."/>
            <person name="Glasner J.D."/>
            <person name="Rode C.K."/>
            <person name="Mayhew G.F."/>
            <person name="Gregor J."/>
            <person name="Davis N.W."/>
            <person name="Kirkpatrick H.A."/>
            <person name="Goeden M.A."/>
            <person name="Rose D.J."/>
            <person name="Mau B."/>
            <person name="Shao Y."/>
        </authorList>
    </citation>
    <scope>NUCLEOTIDE SEQUENCE [LARGE SCALE GENOMIC DNA]</scope>
    <source>
        <strain>K12 / MG1655 / ATCC 47076</strain>
    </source>
</reference>
<reference key="3">
    <citation type="journal article" date="2006" name="Mol. Syst. Biol.">
        <title>Highly accurate genome sequences of Escherichia coli K-12 strains MG1655 and W3110.</title>
        <authorList>
            <person name="Hayashi K."/>
            <person name="Morooka N."/>
            <person name="Yamamoto Y."/>
            <person name="Fujita K."/>
            <person name="Isono K."/>
            <person name="Choi S."/>
            <person name="Ohtsubo E."/>
            <person name="Baba T."/>
            <person name="Wanner B.L."/>
            <person name="Mori H."/>
            <person name="Horiuchi T."/>
        </authorList>
    </citation>
    <scope>NUCLEOTIDE SEQUENCE [LARGE SCALE GENOMIC DNA]</scope>
    <source>
        <strain>K12 / W3110 / ATCC 27325 / DSM 5911</strain>
    </source>
</reference>
<reference key="4">
    <citation type="journal article" date="2002" name="Mol. Cell">
        <title>ClpS, a substrate modulator of the ClpAP machine.</title>
        <authorList>
            <person name="Dougan D.A."/>
            <person name="Reid B.G."/>
            <person name="Horwich A.L."/>
            <person name="Bukau B."/>
        </authorList>
    </citation>
    <scope>FUNCTION</scope>
    <scope>INTERACTION WITH CLPA</scope>
</reference>
<reference key="5">
    <citation type="journal article" date="2002" name="Nat. Struct. Biol.">
        <title>Structural analysis of the adaptor protein ClpS in complex with the N-terminal domain of ClpA.</title>
        <authorList>
            <person name="Zeth K."/>
            <person name="Ravelli R.B."/>
            <person name="Paal K."/>
            <person name="Cusack S."/>
            <person name="Bukau B."/>
            <person name="Dougan D.A."/>
        </authorList>
    </citation>
    <scope>X-RAY CRYSTALLOGRAPHY (2.5 ANGSTROMS) IN COMPLEX WITH CLPA</scope>
</reference>
<reference key="6">
    <citation type="journal article" date="2002" name="J. Biol. Chem.">
        <title>Crystal structure of the heterodimeric complex of the adaptor, ClpS, with the N-domain of the AAA+ chaperone, ClpA.</title>
        <authorList>
            <person name="Guo F."/>
            <person name="Esser L."/>
            <person name="Singh S.K."/>
            <person name="Maurizi M.R."/>
            <person name="Xia D."/>
        </authorList>
    </citation>
    <scope>X-RAY CRYSTALLOGRAPHY (2.25 ANGSTROMS) IN COMPLEX WITH CLPA</scope>
</reference>
<evidence type="ECO:0000255" key="1">
    <source>
        <dbReference type="HAMAP-Rule" id="MF_00302"/>
    </source>
</evidence>
<evidence type="ECO:0000269" key="2">
    <source>
    </source>
</evidence>
<evidence type="ECO:0000269" key="3">
    <source>
    </source>
</evidence>
<evidence type="ECO:0000269" key="4">
    <source>
    </source>
</evidence>
<evidence type="ECO:0007829" key="5">
    <source>
        <dbReference type="PDB" id="2W9R"/>
    </source>
</evidence>
<evidence type="ECO:0007829" key="6">
    <source>
        <dbReference type="PDB" id="3O1F"/>
    </source>
</evidence>
<feature type="chain" id="PRO_0000215707" description="ATP-dependent Clp protease adapter protein ClpS">
    <location>
        <begin position="1"/>
        <end position="106"/>
    </location>
</feature>
<feature type="helix" evidence="5">
    <location>
        <begin position="13"/>
        <end position="20"/>
    </location>
</feature>
<feature type="strand" evidence="6">
    <location>
        <begin position="28"/>
        <end position="33"/>
    </location>
</feature>
<feature type="strand" evidence="6">
    <location>
        <begin position="36"/>
        <end position="38"/>
    </location>
</feature>
<feature type="helix" evidence="6">
    <location>
        <begin position="40"/>
        <end position="51"/>
    </location>
</feature>
<feature type="helix" evidence="6">
    <location>
        <begin position="55"/>
        <end position="68"/>
    </location>
</feature>
<feature type="strand" evidence="6">
    <location>
        <begin position="69"/>
        <end position="76"/>
    </location>
</feature>
<feature type="helix" evidence="6">
    <location>
        <begin position="78"/>
        <end position="94"/>
    </location>
</feature>
<feature type="strand" evidence="6">
    <location>
        <begin position="100"/>
        <end position="105"/>
    </location>
</feature>
<gene>
    <name evidence="1" type="primary">clpS</name>
    <name type="synonym">yljA</name>
    <name type="ordered locus">b0881</name>
    <name type="ordered locus">JW0865</name>
</gene>
<sequence>MGKTNDWLDFDQLAEEKVRDALKPPSMYKVILVNDDYTPMEFVIDVLQKFFSYDVERATQLMLAVHYQGKAICGVFTAEVAETKVAMVNKYARENEHPLLCTLEKA</sequence>
<protein>
    <recommendedName>
        <fullName evidence="1">ATP-dependent Clp protease adapter protein ClpS</fullName>
    </recommendedName>
</protein>
<comment type="function">
    <text evidence="1 2">Involved in the modulation of the specificity of the ClpAP-mediated ATP-dependent protein degradation.</text>
</comment>
<comment type="subunit">
    <text evidence="1 3 4">Binds to the N-terminal domain of the chaperone ClpA.</text>
</comment>
<comment type="interaction">
    <interactant intactId="EBI-561456">
        <id>P0A8Q6</id>
    </interactant>
    <interactant intactId="EBI-546140">
        <id>P0ABH9</id>
        <label>clpA</label>
    </interactant>
    <organismsDiffer>false</organismsDiffer>
    <experiments>13</experiments>
</comment>
<comment type="interaction">
    <interactant intactId="EBI-561456">
        <id>P0A8Q6</id>
    </interactant>
    <interactant intactId="EBI-549640">
        <id>P0ABT2</id>
        <label>dps</label>
    </interactant>
    <organismsDiffer>false</organismsDiffer>
    <experiments>5</experiments>
</comment>
<comment type="similarity">
    <text evidence="1">Belongs to the ClpS family.</text>
</comment>
<proteinExistence type="evidence at protein level"/>
<dbReference type="EMBL" id="U00096">
    <property type="protein sequence ID" value="AAC73968.1"/>
    <property type="molecule type" value="Genomic_DNA"/>
</dbReference>
<dbReference type="EMBL" id="AP009048">
    <property type="protein sequence ID" value="BAA35600.1"/>
    <property type="molecule type" value="Genomic_DNA"/>
</dbReference>
<dbReference type="PIR" id="A64827">
    <property type="entry name" value="A64827"/>
</dbReference>
<dbReference type="RefSeq" id="NP_415402.1">
    <property type="nucleotide sequence ID" value="NC_000913.3"/>
</dbReference>
<dbReference type="RefSeq" id="WP_000520781.1">
    <property type="nucleotide sequence ID" value="NZ_STEB01000006.1"/>
</dbReference>
<dbReference type="PDB" id="1LZW">
    <property type="method" value="X-ray"/>
    <property type="resolution" value="2.50 A"/>
    <property type="chains" value="A=1-106"/>
</dbReference>
<dbReference type="PDB" id="1MBU">
    <property type="method" value="X-ray"/>
    <property type="resolution" value="2.30 A"/>
    <property type="chains" value="C/D=1-106"/>
</dbReference>
<dbReference type="PDB" id="1MBV">
    <property type="method" value="X-ray"/>
    <property type="resolution" value="3.30 A"/>
    <property type="chains" value="B=1-106"/>
</dbReference>
<dbReference type="PDB" id="1MBX">
    <property type="method" value="X-ray"/>
    <property type="resolution" value="2.25 A"/>
    <property type="chains" value="C/D=1-106"/>
</dbReference>
<dbReference type="PDB" id="1MG9">
    <property type="method" value="X-ray"/>
    <property type="resolution" value="2.30 A"/>
    <property type="chains" value="A=1-106"/>
</dbReference>
<dbReference type="PDB" id="1R6O">
    <property type="method" value="X-ray"/>
    <property type="resolution" value="2.25 A"/>
    <property type="chains" value="C/D=1-106"/>
</dbReference>
<dbReference type="PDB" id="1R6Q">
    <property type="method" value="X-ray"/>
    <property type="resolution" value="2.35 A"/>
    <property type="chains" value="C/D=1-106"/>
</dbReference>
<dbReference type="PDB" id="2W9R">
    <property type="method" value="X-ray"/>
    <property type="resolution" value="1.70 A"/>
    <property type="chains" value="A=1-106"/>
</dbReference>
<dbReference type="PDB" id="2WA8">
    <property type="method" value="X-ray"/>
    <property type="resolution" value="2.15 A"/>
    <property type="chains" value="A/C=1-106"/>
</dbReference>
<dbReference type="PDB" id="2WA9">
    <property type="method" value="X-ray"/>
    <property type="resolution" value="2.90 A"/>
    <property type="chains" value="A/B/C/D/E/F/G=1-106"/>
</dbReference>
<dbReference type="PDB" id="3O1F">
    <property type="method" value="X-ray"/>
    <property type="resolution" value="1.40 A"/>
    <property type="chains" value="A/B=26-106"/>
</dbReference>
<dbReference type="PDB" id="3O2B">
    <property type="method" value="X-ray"/>
    <property type="resolution" value="2.05 A"/>
    <property type="chains" value="A/C=2-106"/>
</dbReference>
<dbReference type="PDB" id="3O2H">
    <property type="method" value="X-ray"/>
    <property type="resolution" value="1.70 A"/>
    <property type="chains" value="A=2-106"/>
</dbReference>
<dbReference type="PDB" id="3O2O">
    <property type="method" value="X-ray"/>
    <property type="resolution" value="2.90 A"/>
    <property type="chains" value="A/B/C/D/E/F/G/H=22-106"/>
</dbReference>
<dbReference type="PDB" id="7UIV">
    <property type="method" value="EM"/>
    <property type="resolution" value="3.38 A"/>
    <property type="chains" value="S=1-106"/>
</dbReference>
<dbReference type="PDB" id="7UIW">
    <property type="method" value="EM"/>
    <property type="resolution" value="3.33 A"/>
    <property type="chains" value="S=1-106"/>
</dbReference>
<dbReference type="PDB" id="7UIX">
    <property type="method" value="EM"/>
    <property type="resolution" value="3.24 A"/>
    <property type="chains" value="S=1-106"/>
</dbReference>
<dbReference type="PDB" id="7UIY">
    <property type="method" value="EM"/>
    <property type="resolution" value="3.22 A"/>
    <property type="chains" value="S=1-106"/>
</dbReference>
<dbReference type="PDB" id="7UIZ">
    <property type="method" value="EM"/>
    <property type="resolution" value="3.24 A"/>
    <property type="chains" value="S=1-106"/>
</dbReference>
<dbReference type="PDB" id="7UJ0">
    <property type="method" value="EM"/>
    <property type="resolution" value="3.26 A"/>
    <property type="chains" value="S=1-106"/>
</dbReference>
<dbReference type="PDBsum" id="1LZW"/>
<dbReference type="PDBsum" id="1MBU"/>
<dbReference type="PDBsum" id="1MBV"/>
<dbReference type="PDBsum" id="1MBX"/>
<dbReference type="PDBsum" id="1MG9"/>
<dbReference type="PDBsum" id="1R6O"/>
<dbReference type="PDBsum" id="1R6Q"/>
<dbReference type="PDBsum" id="2W9R"/>
<dbReference type="PDBsum" id="2WA8"/>
<dbReference type="PDBsum" id="2WA9"/>
<dbReference type="PDBsum" id="3O1F"/>
<dbReference type="PDBsum" id="3O2B"/>
<dbReference type="PDBsum" id="3O2H"/>
<dbReference type="PDBsum" id="3O2O"/>
<dbReference type="PDBsum" id="7UIV"/>
<dbReference type="PDBsum" id="7UIW"/>
<dbReference type="PDBsum" id="7UIX"/>
<dbReference type="PDBsum" id="7UIY"/>
<dbReference type="PDBsum" id="7UIZ"/>
<dbReference type="PDBsum" id="7UJ0"/>
<dbReference type="SMR" id="P0A8Q6"/>
<dbReference type="BioGRID" id="4261321">
    <property type="interactions" value="88"/>
</dbReference>
<dbReference type="BioGRID" id="852740">
    <property type="interactions" value="2"/>
</dbReference>
<dbReference type="DIP" id="DIP-35408N"/>
<dbReference type="FunCoup" id="P0A8Q6">
    <property type="interactions" value="256"/>
</dbReference>
<dbReference type="IntAct" id="P0A8Q6">
    <property type="interactions" value="43"/>
</dbReference>
<dbReference type="MINT" id="P0A8Q6"/>
<dbReference type="STRING" id="511145.b0881"/>
<dbReference type="jPOST" id="P0A8Q6"/>
<dbReference type="PaxDb" id="511145-b0881"/>
<dbReference type="EnsemblBacteria" id="AAC73968">
    <property type="protein sequence ID" value="AAC73968"/>
    <property type="gene ID" value="b0881"/>
</dbReference>
<dbReference type="GeneID" id="86863397"/>
<dbReference type="GeneID" id="948443"/>
<dbReference type="KEGG" id="ecj:JW0865"/>
<dbReference type="KEGG" id="eco:b0881"/>
<dbReference type="KEGG" id="ecoc:C3026_05470"/>
<dbReference type="PATRIC" id="fig|1411691.4.peg.1396"/>
<dbReference type="EchoBASE" id="EB3992"/>
<dbReference type="eggNOG" id="COG2127">
    <property type="taxonomic scope" value="Bacteria"/>
</dbReference>
<dbReference type="HOGENOM" id="CLU_134358_2_1_6"/>
<dbReference type="InParanoid" id="P0A8Q6"/>
<dbReference type="OMA" id="DDFTPMD"/>
<dbReference type="OrthoDB" id="9796121at2"/>
<dbReference type="PhylomeDB" id="P0A8Q6"/>
<dbReference type="BioCyc" id="EcoCyc:G6463-MONOMER"/>
<dbReference type="EvolutionaryTrace" id="P0A8Q6"/>
<dbReference type="PRO" id="PR:P0A8Q6"/>
<dbReference type="Proteomes" id="UP000000625">
    <property type="component" value="Chromosome"/>
</dbReference>
<dbReference type="GO" id="GO:0140678">
    <property type="term" value="F:molecular function inhibitor activity"/>
    <property type="evidence" value="ECO:0000314"/>
    <property type="project" value="DisProt"/>
</dbReference>
<dbReference type="GO" id="GO:0051087">
    <property type="term" value="F:protein-folding chaperone binding"/>
    <property type="evidence" value="ECO:0000353"/>
    <property type="project" value="EcoCyc"/>
</dbReference>
<dbReference type="GO" id="GO:0030163">
    <property type="term" value="P:protein catabolic process"/>
    <property type="evidence" value="ECO:0007669"/>
    <property type="project" value="InterPro"/>
</dbReference>
<dbReference type="GO" id="GO:0006508">
    <property type="term" value="P:proteolysis"/>
    <property type="evidence" value="ECO:0007669"/>
    <property type="project" value="UniProtKB-UniRule"/>
</dbReference>
<dbReference type="GO" id="GO:0009408">
    <property type="term" value="P:response to heat"/>
    <property type="evidence" value="ECO:0000315"/>
    <property type="project" value="EcoCyc"/>
</dbReference>
<dbReference type="FunFam" id="3.30.1390.10:FF:000002">
    <property type="entry name" value="ATP-dependent Clp protease adapter protein ClpS"/>
    <property type="match status" value="1"/>
</dbReference>
<dbReference type="Gene3D" id="3.30.1390.10">
    <property type="match status" value="1"/>
</dbReference>
<dbReference type="HAMAP" id="MF_00302">
    <property type="entry name" value="ClpS"/>
    <property type="match status" value="1"/>
</dbReference>
<dbReference type="InterPro" id="IPR022935">
    <property type="entry name" value="ClpS"/>
</dbReference>
<dbReference type="InterPro" id="IPR003769">
    <property type="entry name" value="ClpS_core"/>
</dbReference>
<dbReference type="InterPro" id="IPR014719">
    <property type="entry name" value="Ribosomal_bL12_C/ClpS-like"/>
</dbReference>
<dbReference type="NCBIfam" id="NF000670">
    <property type="entry name" value="PRK00033.1-3"/>
    <property type="match status" value="1"/>
</dbReference>
<dbReference type="NCBIfam" id="NF000672">
    <property type="entry name" value="PRK00033.1-5"/>
    <property type="match status" value="1"/>
</dbReference>
<dbReference type="PANTHER" id="PTHR33473:SF19">
    <property type="entry name" value="ATP-DEPENDENT CLP PROTEASE ADAPTER PROTEIN CLPS"/>
    <property type="match status" value="1"/>
</dbReference>
<dbReference type="PANTHER" id="PTHR33473">
    <property type="entry name" value="ATP-DEPENDENT CLP PROTEASE ADAPTER PROTEIN CLPS1, CHLOROPLASTIC"/>
    <property type="match status" value="1"/>
</dbReference>
<dbReference type="Pfam" id="PF02617">
    <property type="entry name" value="ClpS"/>
    <property type="match status" value="1"/>
</dbReference>
<dbReference type="SUPFAM" id="SSF54736">
    <property type="entry name" value="ClpS-like"/>
    <property type="match status" value="1"/>
</dbReference>
<name>CLPS_ECOLI</name>
<organism>
    <name type="scientific">Escherichia coli (strain K12)</name>
    <dbReference type="NCBI Taxonomy" id="83333"/>
    <lineage>
        <taxon>Bacteria</taxon>
        <taxon>Pseudomonadati</taxon>
        <taxon>Pseudomonadota</taxon>
        <taxon>Gammaproteobacteria</taxon>
        <taxon>Enterobacterales</taxon>
        <taxon>Enterobacteriaceae</taxon>
        <taxon>Escherichia</taxon>
    </lineage>
</organism>
<accession>P0A8Q6</accession>
<accession>P75832</accession>